<reference key="1">
    <citation type="journal article" date="1999" name="J. Nat. Toxins">
        <title>Studies on conotoxins of Conus betulinus.</title>
        <authorList>
            <person name="Chen J.-S."/>
            <person name="Fan C.-X."/>
            <person name="Hu K.-P."/>
            <person name="Wei K.-H."/>
            <person name="Zhong M.-N."/>
        </authorList>
    </citation>
    <scope>PROTEIN SEQUENCE</scope>
    <scope>MASS SPECTROMETRY</scope>
    <source>
        <tissue>Venom</tissue>
    </source>
</reference>
<name>CX2A_CONBE</name>
<protein>
    <recommendedName>
        <fullName evidence="3">Conotoxin Bt12.1</fullName>
    </recommendedName>
    <alternativeName>
        <fullName evidence="2">Conotoxin BeTXIIa</fullName>
    </alternativeName>
</protein>
<proteinExistence type="evidence at protein level"/>
<keyword id="KW-0903">Direct protein sequencing</keyword>
<keyword id="KW-1015">Disulfide bond</keyword>
<keyword id="KW-0528">Neurotoxin</keyword>
<keyword id="KW-0964">Secreted</keyword>
<keyword id="KW-0800">Toxin</keyword>
<evidence type="ECO:0000269" key="1">
    <source>
    </source>
</evidence>
<evidence type="ECO:0000303" key="2">
    <source>
    </source>
</evidence>
<evidence type="ECO:0000305" key="3"/>
<accession>P58625</accession>
<feature type="peptide" id="PRO_0000044511" description="Conotoxin Bt12.1">
    <location>
        <begin position="1"/>
        <end position="30"/>
    </location>
</feature>
<organism>
    <name type="scientific">Conus betulinus</name>
    <name type="common">Beech cone</name>
    <dbReference type="NCBI Taxonomy" id="89764"/>
    <lineage>
        <taxon>Eukaryota</taxon>
        <taxon>Metazoa</taxon>
        <taxon>Spiralia</taxon>
        <taxon>Lophotrochozoa</taxon>
        <taxon>Mollusca</taxon>
        <taxon>Gastropoda</taxon>
        <taxon>Caenogastropoda</taxon>
        <taxon>Neogastropoda</taxon>
        <taxon>Conoidea</taxon>
        <taxon>Conidae</taxon>
        <taxon>Conus</taxon>
        <taxon>Dendroconus</taxon>
    </lineage>
</organism>
<sequence length="30" mass="3438">RCAHGTYYSNDSQQCLLNCCWWGGGDHCCR</sequence>
<comment type="subcellular location">
    <subcellularLocation>
        <location>Secreted</location>
    </subcellularLocation>
</comment>
<comment type="tissue specificity">
    <text>Expressed by the venom duct.</text>
</comment>
<comment type="domain">
    <text>The cysteine framework is XVIII (C-C-CC-CC).</text>
</comment>
<comment type="PTM">
    <text evidence="3">Contains 3 disulfide bonds.</text>
</comment>
<comment type="mass spectrometry" mass="3432.1" method="MALDI" evidence="1"/>
<dbReference type="ConoServer" id="1526">
    <property type="toxin name" value="BeTXIIa"/>
</dbReference>
<dbReference type="GO" id="GO:0005576">
    <property type="term" value="C:extracellular region"/>
    <property type="evidence" value="ECO:0007669"/>
    <property type="project" value="UniProtKB-SubCell"/>
</dbReference>
<dbReference type="GO" id="GO:0090729">
    <property type="term" value="F:toxin activity"/>
    <property type="evidence" value="ECO:0007669"/>
    <property type="project" value="UniProtKB-KW"/>
</dbReference>